<sequence>MEQLPEDQGPQREPYNEWTLEILEELKREAVRHFPRDWLHQLGQHIYTTYGDTWAGVEAIIRILQQLLFIHYRIGCHHSRIGININQQRRRRNGANRS</sequence>
<keyword id="KW-0010">Activator</keyword>
<keyword id="KW-0014">AIDS</keyword>
<keyword id="KW-0053">Apoptosis</keyword>
<keyword id="KW-0131">Cell cycle</keyword>
<keyword id="KW-1079">Host G2/M cell cycle arrest by virus</keyword>
<keyword id="KW-1048">Host nucleus</keyword>
<keyword id="KW-0945">Host-virus interaction</keyword>
<keyword id="KW-0407">Ion channel</keyword>
<keyword id="KW-0406">Ion transport</keyword>
<keyword id="KW-1121">Modulation of host cell cycle by virus</keyword>
<keyword id="KW-0597">Phosphoprotein</keyword>
<keyword id="KW-1185">Reference proteome</keyword>
<keyword id="KW-0804">Transcription</keyword>
<keyword id="KW-0805">Transcription regulation</keyword>
<keyword id="KW-0813">Transport</keyword>
<keyword id="KW-1163">Viral penetration into host nucleus</keyword>
<keyword id="KW-0946">Virion</keyword>
<keyword id="KW-1160">Virus entry into host cell</keyword>
<comment type="function">
    <text evidence="1">During virus replication, may deplete host UNG protein, and incude G2-M cell cycle arrest. Acts by targeting specific host proteins for degradation by the 26S proteasome, through association with the cellular CUL4A-DDB1 E3 ligase complex by direct interaction with host VPRPB/DCAF-1. Cell cycle arrest reportedly occurs within hours of infection and is not blocked by antiviral agents, suggesting that it is initiated by the VPR carried into the virion. Additionally, VPR induces apoptosis in a cell cycle dependent manner suggesting that these two effects are mechanistically linked. Detected in the serum and cerebrospinal fluid of AIDS patient, VPR may also induce cell death to bystander cells.</text>
</comment>
<comment type="function">
    <text evidence="1">During virus entry, plays a role in the transport of the viral pre-integration (PIC) complex to the host nucleus. This function is crucial for viral infection of non-dividing macrophages. May act directly at the nuclear pore complex, by binding nucleoporins phenylalanine-glycine (FG)-repeat regions.</text>
</comment>
<comment type="subunit">
    <text evidence="1">Homooligomer, may form homodimer. Interacts with p6-gag region of the Pr55 Gag precursor protein through a (Leu-X-X)4 motif near the C-terminus of the P6gag protein. Interacts with host UNG. May interact with host RAD23A/HHR23A. Interacts with host VPRBP/DCAF1, leading to hijack the CUL4A-RBX1-DDB1-DCAF1/VPRBP complex, mediating ubiquitination of host proteins such as TERT and ZGPAT and arrest of the cell cycle in G2 phase.</text>
</comment>
<comment type="subcellular location">
    <subcellularLocation>
        <location evidence="1">Virion</location>
    </subcellularLocation>
    <subcellularLocation>
        <location evidence="1">Host nucleus</location>
    </subcellularLocation>
    <subcellularLocation>
        <location evidence="1">Host extracellular space</location>
    </subcellularLocation>
    <text evidence="1">Incorporation into virion is dependent on p6 GAG sequences. Lacks a canonical nuclear localization signal, thus import into nucleus may function independently of the human importin pathway. Detected in high quantity in the serum and cerebrospinal fluid of AIDS patient.</text>
</comment>
<comment type="PTM">
    <text evidence="1">Phosphorylated on several residues by host. These phosphorylations regulate VPR activity for the nuclear import of the HIV-1 pre-integration complex.</text>
</comment>
<comment type="miscellaneous">
    <text evidence="1">HIV-1 lineages are divided in three main groups, M (for Major), O (for Outlier), and N (for New, or Non-M, Non-O). The vast majority of strains found worldwide belong to the group M. Group O seems to be endemic to and largely confined to Cameroon and neighboring countries in West Central Africa, where these viruses represent a small minority of HIV-1 strains. The group N is represented by a limited number of isolates from Cameroonian persons. The group M is further subdivided in 9 clades or subtypes (A to D, F to H, J and K).</text>
</comment>
<comment type="similarity">
    <text evidence="1">Belongs to the HIV-1 VPR protein family.</text>
</comment>
<reference key="1">
    <citation type="journal article" date="2006" name="Science">
        <title>Chimpanzee reservoirs of pandemic and nonpandemic HIV-1.</title>
        <authorList>
            <person name="Keele B.F."/>
            <person name="Van Heuverswyn F."/>
            <person name="Li Y."/>
            <person name="Bailes E."/>
            <person name="Takehisa J."/>
            <person name="Santiago M.L."/>
            <person name="Bibollet-Ruche F."/>
            <person name="Chen Y."/>
            <person name="Wain L.V."/>
            <person name="Liegeois F."/>
            <person name="Loul S."/>
            <person name="Ngole E.M."/>
            <person name="Bienvenue Y."/>
            <person name="Delaporte E."/>
            <person name="Brookfield J.F."/>
            <person name="Sharp P.M."/>
            <person name="Shaw G.M."/>
            <person name="Peeters M."/>
            <person name="Hahn B.H."/>
        </authorList>
    </citation>
    <scope>NUCLEOTIDE SEQUENCE [GENOMIC RNA]</scope>
</reference>
<gene>
    <name evidence="1" type="primary">vpr</name>
</gene>
<organismHost>
    <name type="scientific">Pan troglodytes</name>
    <name type="common">Chimpanzee</name>
    <dbReference type="NCBI Taxonomy" id="9598"/>
</organismHost>
<feature type="chain" id="PRO_0000248298" description="Protein Vpr">
    <location>
        <begin position="1"/>
        <end position="98"/>
    </location>
</feature>
<feature type="region of interest" description="Homooligomerization" evidence="1">
    <location>
        <begin position="1"/>
        <end position="42"/>
    </location>
</feature>
<feature type="modified residue" description="Phosphoserine; by host" evidence="1">
    <location>
        <position position="79"/>
    </location>
</feature>
<feature type="modified residue" description="Phosphoserine; by host" evidence="1">
    <location>
        <position position="98"/>
    </location>
</feature>
<protein>
    <recommendedName>
        <fullName evidence="1">Protein Vpr</fullName>
    </recommendedName>
    <alternativeName>
        <fullName evidence="1">R ORF protein</fullName>
    </alternativeName>
    <alternativeName>
        <fullName evidence="1">Viral protein R</fullName>
    </alternativeName>
</protein>
<proteinExistence type="inferred from homology"/>
<dbReference type="EMBL" id="DQ373063">
    <property type="protein sequence ID" value="ABD19477.1"/>
    <property type="molecule type" value="Genomic_RNA"/>
</dbReference>
<dbReference type="SMR" id="Q1A265"/>
<dbReference type="Proteomes" id="UP000009152">
    <property type="component" value="Segment"/>
</dbReference>
<dbReference type="GO" id="GO:0043657">
    <property type="term" value="C:host cell"/>
    <property type="evidence" value="ECO:0007669"/>
    <property type="project" value="GOC"/>
</dbReference>
<dbReference type="GO" id="GO:0042025">
    <property type="term" value="C:host cell nucleus"/>
    <property type="evidence" value="ECO:0007669"/>
    <property type="project" value="UniProtKB-SubCell"/>
</dbReference>
<dbReference type="GO" id="GO:0043655">
    <property type="term" value="C:host extracellular space"/>
    <property type="evidence" value="ECO:0007669"/>
    <property type="project" value="UniProtKB-SubCell"/>
</dbReference>
<dbReference type="GO" id="GO:0044423">
    <property type="term" value="C:virion component"/>
    <property type="evidence" value="ECO:0007669"/>
    <property type="project" value="UniProtKB-UniRule"/>
</dbReference>
<dbReference type="GO" id="GO:0006351">
    <property type="term" value="P:DNA-templated transcription"/>
    <property type="evidence" value="ECO:0007669"/>
    <property type="project" value="UniProtKB-UniRule"/>
</dbReference>
<dbReference type="GO" id="GO:0034220">
    <property type="term" value="P:monoatomic ion transmembrane transport"/>
    <property type="evidence" value="ECO:0007669"/>
    <property type="project" value="UniProtKB-KW"/>
</dbReference>
<dbReference type="GO" id="GO:0051260">
    <property type="term" value="P:protein homooligomerization"/>
    <property type="evidence" value="ECO:0007669"/>
    <property type="project" value="UniProtKB-UniRule"/>
</dbReference>
<dbReference type="GO" id="GO:0006355">
    <property type="term" value="P:regulation of DNA-templated transcription"/>
    <property type="evidence" value="ECO:0007669"/>
    <property type="project" value="UniProtKB-UniRule"/>
</dbReference>
<dbReference type="GO" id="GO:0046718">
    <property type="term" value="P:symbiont entry into host cell"/>
    <property type="evidence" value="ECO:0007669"/>
    <property type="project" value="UniProtKB-KW"/>
</dbReference>
<dbReference type="GO" id="GO:0052151">
    <property type="term" value="P:symbiont-mediated activation of host apoptosis"/>
    <property type="evidence" value="ECO:0007669"/>
    <property type="project" value="UniProtKB-UniRule"/>
</dbReference>
<dbReference type="GO" id="GO:0039592">
    <property type="term" value="P:symbiont-mediated arrest of host cell cycle during G2/M transition"/>
    <property type="evidence" value="ECO:0007669"/>
    <property type="project" value="UniProtKB-UniRule"/>
</dbReference>
<dbReference type="GO" id="GO:0075732">
    <property type="term" value="P:viral penetration into host nucleus"/>
    <property type="evidence" value="ECO:0007669"/>
    <property type="project" value="UniProtKB-UniRule"/>
</dbReference>
<dbReference type="Gene3D" id="6.10.210.10">
    <property type="match status" value="1"/>
</dbReference>
<dbReference type="Gene3D" id="1.20.5.90">
    <property type="entry name" value="VpR/VpX protein, C-terminal domain"/>
    <property type="match status" value="1"/>
</dbReference>
<dbReference type="HAMAP" id="MF_04080">
    <property type="entry name" value="HIV_VPR"/>
    <property type="match status" value="1"/>
</dbReference>
<dbReference type="InterPro" id="IPR000012">
    <property type="entry name" value="RetroV_VpR/X"/>
</dbReference>
<dbReference type="Pfam" id="PF00522">
    <property type="entry name" value="VPR"/>
    <property type="match status" value="1"/>
</dbReference>
<dbReference type="PRINTS" id="PR00444">
    <property type="entry name" value="HIVVPRVPX"/>
</dbReference>
<evidence type="ECO:0000255" key="1">
    <source>
        <dbReference type="HAMAP-Rule" id="MF_04080"/>
    </source>
</evidence>
<accession>Q1A265</accession>
<name>VPR_SIVMB</name>
<organism>
    <name type="scientific">Simian immunodeficiency virus (isolate MB66)</name>
    <name type="common">SIV-cpz</name>
    <name type="synonym">Chimpanzee immunodeficiency virus</name>
    <dbReference type="NCBI Taxonomy" id="388911"/>
    <lineage>
        <taxon>Viruses</taxon>
        <taxon>Riboviria</taxon>
        <taxon>Pararnavirae</taxon>
        <taxon>Artverviricota</taxon>
        <taxon>Revtraviricetes</taxon>
        <taxon>Ortervirales</taxon>
        <taxon>Retroviridae</taxon>
        <taxon>Orthoretrovirinae</taxon>
        <taxon>Lentivirus</taxon>
        <taxon>Simian immunodeficiency virus</taxon>
    </lineage>
</organism>